<gene>
    <name evidence="1" type="primary">mutS</name>
    <name type="ordered locus">YPTS_0811</name>
</gene>
<reference key="1">
    <citation type="submission" date="2008-04" db="EMBL/GenBank/DDBJ databases">
        <title>Complete sequence of Yersinia pseudotuberculosis PB1/+.</title>
        <authorList>
            <person name="Copeland A."/>
            <person name="Lucas S."/>
            <person name="Lapidus A."/>
            <person name="Glavina del Rio T."/>
            <person name="Dalin E."/>
            <person name="Tice H."/>
            <person name="Bruce D."/>
            <person name="Goodwin L."/>
            <person name="Pitluck S."/>
            <person name="Munk A.C."/>
            <person name="Brettin T."/>
            <person name="Detter J.C."/>
            <person name="Han C."/>
            <person name="Tapia R."/>
            <person name="Schmutz J."/>
            <person name="Larimer F."/>
            <person name="Land M."/>
            <person name="Hauser L."/>
            <person name="Challacombe J.F."/>
            <person name="Green L."/>
            <person name="Lindler L.E."/>
            <person name="Nikolich M.P."/>
            <person name="Richardson P."/>
        </authorList>
    </citation>
    <scope>NUCLEOTIDE SEQUENCE [LARGE SCALE GENOMIC DNA]</scope>
    <source>
        <strain>PB1/+</strain>
    </source>
</reference>
<name>MUTS_YERPB</name>
<evidence type="ECO:0000255" key="1">
    <source>
        <dbReference type="HAMAP-Rule" id="MF_00096"/>
    </source>
</evidence>
<accession>B2K584</accession>
<protein>
    <recommendedName>
        <fullName evidence="1">DNA mismatch repair protein MutS</fullName>
    </recommendedName>
</protein>
<dbReference type="EMBL" id="CP001048">
    <property type="protein sequence ID" value="ACC87795.1"/>
    <property type="molecule type" value="Genomic_DNA"/>
</dbReference>
<dbReference type="RefSeq" id="WP_011191781.1">
    <property type="nucleotide sequence ID" value="NZ_CP009780.1"/>
</dbReference>
<dbReference type="SMR" id="B2K584"/>
<dbReference type="KEGG" id="ypb:YPTS_0811"/>
<dbReference type="PATRIC" id="fig|502801.10.peg.143"/>
<dbReference type="GO" id="GO:0005829">
    <property type="term" value="C:cytosol"/>
    <property type="evidence" value="ECO:0007669"/>
    <property type="project" value="TreeGrafter"/>
</dbReference>
<dbReference type="GO" id="GO:0005524">
    <property type="term" value="F:ATP binding"/>
    <property type="evidence" value="ECO:0007669"/>
    <property type="project" value="UniProtKB-UniRule"/>
</dbReference>
<dbReference type="GO" id="GO:0140664">
    <property type="term" value="F:ATP-dependent DNA damage sensor activity"/>
    <property type="evidence" value="ECO:0007669"/>
    <property type="project" value="InterPro"/>
</dbReference>
<dbReference type="GO" id="GO:0003684">
    <property type="term" value="F:damaged DNA binding"/>
    <property type="evidence" value="ECO:0007669"/>
    <property type="project" value="UniProtKB-UniRule"/>
</dbReference>
<dbReference type="GO" id="GO:0030983">
    <property type="term" value="F:mismatched DNA binding"/>
    <property type="evidence" value="ECO:0007669"/>
    <property type="project" value="InterPro"/>
</dbReference>
<dbReference type="GO" id="GO:0006298">
    <property type="term" value="P:mismatch repair"/>
    <property type="evidence" value="ECO:0007669"/>
    <property type="project" value="UniProtKB-UniRule"/>
</dbReference>
<dbReference type="CDD" id="cd03284">
    <property type="entry name" value="ABC_MutS1"/>
    <property type="match status" value="1"/>
</dbReference>
<dbReference type="FunFam" id="1.10.1420.10:FF:000002">
    <property type="entry name" value="DNA mismatch repair protein MutS"/>
    <property type="match status" value="1"/>
</dbReference>
<dbReference type="FunFam" id="3.30.420.110:FF:000001">
    <property type="entry name" value="DNA mismatch repair protein MutS"/>
    <property type="match status" value="1"/>
</dbReference>
<dbReference type="FunFam" id="3.40.1170.10:FF:000001">
    <property type="entry name" value="DNA mismatch repair protein MutS"/>
    <property type="match status" value="1"/>
</dbReference>
<dbReference type="FunFam" id="3.40.50.300:FF:000283">
    <property type="entry name" value="DNA mismatch repair protein MutS"/>
    <property type="match status" value="1"/>
</dbReference>
<dbReference type="Gene3D" id="1.10.1420.10">
    <property type="match status" value="2"/>
</dbReference>
<dbReference type="Gene3D" id="6.10.140.430">
    <property type="match status" value="1"/>
</dbReference>
<dbReference type="Gene3D" id="3.40.1170.10">
    <property type="entry name" value="DNA repair protein MutS, domain I"/>
    <property type="match status" value="1"/>
</dbReference>
<dbReference type="Gene3D" id="3.30.420.110">
    <property type="entry name" value="MutS, connector domain"/>
    <property type="match status" value="1"/>
</dbReference>
<dbReference type="Gene3D" id="3.40.50.300">
    <property type="entry name" value="P-loop containing nucleotide triphosphate hydrolases"/>
    <property type="match status" value="1"/>
</dbReference>
<dbReference type="HAMAP" id="MF_00096">
    <property type="entry name" value="MutS"/>
    <property type="match status" value="1"/>
</dbReference>
<dbReference type="InterPro" id="IPR005748">
    <property type="entry name" value="DNA_mismatch_repair_MutS"/>
</dbReference>
<dbReference type="InterPro" id="IPR007695">
    <property type="entry name" value="DNA_mismatch_repair_MutS-lik_N"/>
</dbReference>
<dbReference type="InterPro" id="IPR017261">
    <property type="entry name" value="DNA_mismatch_repair_MutS/MSH"/>
</dbReference>
<dbReference type="InterPro" id="IPR000432">
    <property type="entry name" value="DNA_mismatch_repair_MutS_C"/>
</dbReference>
<dbReference type="InterPro" id="IPR007861">
    <property type="entry name" value="DNA_mismatch_repair_MutS_clamp"/>
</dbReference>
<dbReference type="InterPro" id="IPR007696">
    <property type="entry name" value="DNA_mismatch_repair_MutS_core"/>
</dbReference>
<dbReference type="InterPro" id="IPR016151">
    <property type="entry name" value="DNA_mismatch_repair_MutS_N"/>
</dbReference>
<dbReference type="InterPro" id="IPR036187">
    <property type="entry name" value="DNA_mismatch_repair_MutS_sf"/>
</dbReference>
<dbReference type="InterPro" id="IPR007860">
    <property type="entry name" value="DNA_mmatch_repair_MutS_con_dom"/>
</dbReference>
<dbReference type="InterPro" id="IPR045076">
    <property type="entry name" value="MutS"/>
</dbReference>
<dbReference type="InterPro" id="IPR036678">
    <property type="entry name" value="MutS_con_dom_sf"/>
</dbReference>
<dbReference type="InterPro" id="IPR027417">
    <property type="entry name" value="P-loop_NTPase"/>
</dbReference>
<dbReference type="NCBIfam" id="TIGR01070">
    <property type="entry name" value="mutS1"/>
    <property type="match status" value="1"/>
</dbReference>
<dbReference type="NCBIfam" id="NF003810">
    <property type="entry name" value="PRK05399.1"/>
    <property type="match status" value="1"/>
</dbReference>
<dbReference type="PANTHER" id="PTHR11361:SF34">
    <property type="entry name" value="DNA MISMATCH REPAIR PROTEIN MSH1, MITOCHONDRIAL"/>
    <property type="match status" value="1"/>
</dbReference>
<dbReference type="PANTHER" id="PTHR11361">
    <property type="entry name" value="DNA MISMATCH REPAIR PROTEIN MUTS FAMILY MEMBER"/>
    <property type="match status" value="1"/>
</dbReference>
<dbReference type="Pfam" id="PF01624">
    <property type="entry name" value="MutS_I"/>
    <property type="match status" value="1"/>
</dbReference>
<dbReference type="Pfam" id="PF05188">
    <property type="entry name" value="MutS_II"/>
    <property type="match status" value="1"/>
</dbReference>
<dbReference type="Pfam" id="PF05192">
    <property type="entry name" value="MutS_III"/>
    <property type="match status" value="1"/>
</dbReference>
<dbReference type="Pfam" id="PF05190">
    <property type="entry name" value="MutS_IV"/>
    <property type="match status" value="1"/>
</dbReference>
<dbReference type="Pfam" id="PF00488">
    <property type="entry name" value="MutS_V"/>
    <property type="match status" value="1"/>
</dbReference>
<dbReference type="PIRSF" id="PIRSF037677">
    <property type="entry name" value="DNA_mis_repair_Msh6"/>
    <property type="match status" value="1"/>
</dbReference>
<dbReference type="SMART" id="SM00534">
    <property type="entry name" value="MUTSac"/>
    <property type="match status" value="1"/>
</dbReference>
<dbReference type="SMART" id="SM00533">
    <property type="entry name" value="MUTSd"/>
    <property type="match status" value="1"/>
</dbReference>
<dbReference type="SUPFAM" id="SSF55271">
    <property type="entry name" value="DNA repair protein MutS, domain I"/>
    <property type="match status" value="1"/>
</dbReference>
<dbReference type="SUPFAM" id="SSF53150">
    <property type="entry name" value="DNA repair protein MutS, domain II"/>
    <property type="match status" value="1"/>
</dbReference>
<dbReference type="SUPFAM" id="SSF48334">
    <property type="entry name" value="DNA repair protein MutS, domain III"/>
    <property type="match status" value="1"/>
</dbReference>
<dbReference type="SUPFAM" id="SSF52540">
    <property type="entry name" value="P-loop containing nucleoside triphosphate hydrolases"/>
    <property type="match status" value="1"/>
</dbReference>
<dbReference type="PROSITE" id="PS00486">
    <property type="entry name" value="DNA_MISMATCH_REPAIR_2"/>
    <property type="match status" value="1"/>
</dbReference>
<keyword id="KW-0067">ATP-binding</keyword>
<keyword id="KW-0227">DNA damage</keyword>
<keyword id="KW-0234">DNA repair</keyword>
<keyword id="KW-0238">DNA-binding</keyword>
<keyword id="KW-0547">Nucleotide-binding</keyword>
<sequence length="851" mass="94786">MKNNDKLDSHTPMMQQYLRLKAQHPEILLFYRMGDFYELFYSDAKRASQLLDISLTKRGASAGEPIPMAGVPYHSIENYLAKLVQLGESAAICEQIGDPATSKGPVERKVVRIVTPGTISDEALLQERQDNLLAAIWQDAKGFGYATLDISSGRFRVAEPADLETMAAELQRTNPAELLYPENFEPMSLIEHRHGLRRRPLWEFELDTAKQQLNLQFGTRDLIGFGVEQAHLALRAAGCLLQYVKDTQRTSLPHIRGLTMERQQDGIIMDAATRRNLELTQNLSGGSENTLAAILDCSVTPMGSRMLKRWLHMPIRDIRVLTDRQQAIGGLQDIAAELQTPLRQVGDLERILARLALRTARPRDLARMRHAFQQLPEIHRLLQPIDVPHVQNLLSQVGQFDELQDLLERAIVETPPVLVRDGGVIASGYNAELDEWRALADGATDYLDRLEIREREKLGLDTLKVGFNGVHGYYIQVSRGQSHLVPIHYVRRQTLKNAERYIIPELKEYEDKVLTSKGKALAIEKGLYEEIFDLLLPHLPELQLSANALAELDVLANLAERAETLNYSCPTLSDKPGIKIMGGRHPVVEQVLKEPFISNPLTLSPQRRMLIITGPNMGGKSTYMRQTALIVLLAHLGSYVPADQATIGPIDRIFTRVGAADDLASGRSTFMVEMTETANILHNATEQSLVLMDEIGRGTSTYDGLSLAWACAENLASRIKAMTLFATHYFELTTLPEKMEGVANVHLDALEHGETIAFMHSVQEGAASKSYGLAVAALAGVPRDVIKRARQKLKELESLSNNAAASTIDGSQMTLLNEEIPPAVEALEALDPDSLSPRQALEWIYRLKNMV</sequence>
<comment type="function">
    <text evidence="1">This protein is involved in the repair of mismatches in DNA. It is possible that it carries out the mismatch recognition step. This protein has a weak ATPase activity.</text>
</comment>
<comment type="similarity">
    <text evidence="1">Belongs to the DNA mismatch repair MutS family.</text>
</comment>
<proteinExistence type="inferred from homology"/>
<organism>
    <name type="scientific">Yersinia pseudotuberculosis serotype IB (strain PB1/+)</name>
    <dbReference type="NCBI Taxonomy" id="502801"/>
    <lineage>
        <taxon>Bacteria</taxon>
        <taxon>Pseudomonadati</taxon>
        <taxon>Pseudomonadota</taxon>
        <taxon>Gammaproteobacteria</taxon>
        <taxon>Enterobacterales</taxon>
        <taxon>Yersiniaceae</taxon>
        <taxon>Yersinia</taxon>
    </lineage>
</organism>
<feature type="chain" id="PRO_1000093655" description="DNA mismatch repair protein MutS">
    <location>
        <begin position="1"/>
        <end position="851"/>
    </location>
</feature>
<feature type="binding site" evidence="1">
    <location>
        <begin position="614"/>
        <end position="621"/>
    </location>
    <ligand>
        <name>ATP</name>
        <dbReference type="ChEBI" id="CHEBI:30616"/>
    </ligand>
</feature>